<accession>Q9BPC4</accession>
<feature type="signal peptide" evidence="2">
    <location>
        <begin position="1"/>
        <end position="18"/>
    </location>
</feature>
<feature type="propeptide" id="PRO_0000404820" evidence="1">
    <location>
        <begin position="19"/>
        <end position="45"/>
    </location>
</feature>
<feature type="peptide" id="PRO_0000404821" description="Conotoxin VnMEKL-0111">
    <location>
        <begin position="46"/>
        <end position="76"/>
    </location>
</feature>
<feature type="disulfide bond" evidence="1">
    <location>
        <begin position="49"/>
        <end position="65"/>
    </location>
</feature>
<feature type="disulfide bond" evidence="1">
    <location>
        <begin position="56"/>
        <end position="70"/>
    </location>
</feature>
<feature type="disulfide bond" evidence="1">
    <location>
        <begin position="64"/>
        <end position="74"/>
    </location>
</feature>
<proteinExistence type="evidence at transcript level"/>
<protein>
    <recommendedName>
        <fullName>Conotoxin VnMEKL-0111</fullName>
    </recommendedName>
</protein>
<reference key="1">
    <citation type="journal article" date="2001" name="Mol. Biol. Evol.">
        <title>Mechanisms for evolving hypervariability: the case of conopeptides.</title>
        <authorList>
            <person name="Conticello S.G."/>
            <person name="Gilad Y."/>
            <person name="Avidan N."/>
            <person name="Ben-Asher E."/>
            <person name="Levy Z."/>
            <person name="Fainzilber M."/>
        </authorList>
    </citation>
    <scope>NUCLEOTIDE SEQUENCE [MRNA]</scope>
    <source>
        <tissue>Venom duct</tissue>
    </source>
</reference>
<dbReference type="EMBL" id="AF215010">
    <property type="protein sequence ID" value="AAG60438.1"/>
    <property type="molecule type" value="mRNA"/>
</dbReference>
<dbReference type="ConoServer" id="697">
    <property type="toxin name" value="Vn6.6 precursor"/>
</dbReference>
<dbReference type="GO" id="GO:0005576">
    <property type="term" value="C:extracellular region"/>
    <property type="evidence" value="ECO:0007669"/>
    <property type="project" value="UniProtKB-SubCell"/>
</dbReference>
<dbReference type="GO" id="GO:0008200">
    <property type="term" value="F:ion channel inhibitor activity"/>
    <property type="evidence" value="ECO:0007669"/>
    <property type="project" value="InterPro"/>
</dbReference>
<dbReference type="GO" id="GO:0090729">
    <property type="term" value="F:toxin activity"/>
    <property type="evidence" value="ECO:0007669"/>
    <property type="project" value="UniProtKB-KW"/>
</dbReference>
<dbReference type="InterPro" id="IPR004214">
    <property type="entry name" value="Conotoxin"/>
</dbReference>
<dbReference type="Pfam" id="PF02950">
    <property type="entry name" value="Conotoxin"/>
    <property type="match status" value="1"/>
</dbReference>
<organism>
    <name type="scientific">Conus ventricosus</name>
    <name type="common">Mediterranean cone</name>
    <dbReference type="NCBI Taxonomy" id="117992"/>
    <lineage>
        <taxon>Eukaryota</taxon>
        <taxon>Metazoa</taxon>
        <taxon>Spiralia</taxon>
        <taxon>Lophotrochozoa</taxon>
        <taxon>Mollusca</taxon>
        <taxon>Gastropoda</taxon>
        <taxon>Caenogastropoda</taxon>
        <taxon>Neogastropoda</taxon>
        <taxon>Conoidea</taxon>
        <taxon>Conidae</taxon>
        <taxon>Conus</taxon>
        <taxon>Lautoconus</taxon>
    </lineage>
</organism>
<comment type="subcellular location">
    <subcellularLocation>
        <location evidence="1">Secreted</location>
    </subcellularLocation>
</comment>
<comment type="tissue specificity">
    <text>Expressed by the venom duct.</text>
</comment>
<comment type="domain">
    <text evidence="1">The presence of a 'disulfide through disulfide knot' structurally defines this protein as a knottin.</text>
</comment>
<comment type="domain">
    <text>The cysteine framework is VI/VII (C-C-CC-C-C).</text>
</comment>
<comment type="similarity">
    <text evidence="3">Belongs to the conotoxin O2 superfamily.</text>
</comment>
<keyword id="KW-1015">Disulfide bond</keyword>
<keyword id="KW-0960">Knottin</keyword>
<keyword id="KW-0528">Neurotoxin</keyword>
<keyword id="KW-0964">Secreted</keyword>
<keyword id="KW-0732">Signal</keyword>
<keyword id="KW-0800">Toxin</keyword>
<evidence type="ECO:0000250" key="1"/>
<evidence type="ECO:0000255" key="2"/>
<evidence type="ECO:0000305" key="3"/>
<name>O266B_CONVE</name>
<sequence length="76" mass="8534">MKLTILFLVAAVLMSTQALIQHDGEKSQKAKMKFLTARTLSAKTRGVDCVGLSSYCGPWNNPPCCSWYTCDYYCKF</sequence>